<reference key="1">
    <citation type="journal article" date="2004" name="Nat. Biotechnol.">
        <title>The genome sequence of the capnophilic rumen bacterium Mannheimia succiniciproducens.</title>
        <authorList>
            <person name="Hong S.H."/>
            <person name="Kim J.S."/>
            <person name="Lee S.Y."/>
            <person name="In Y.H."/>
            <person name="Choi S.S."/>
            <person name="Rih J.-K."/>
            <person name="Kim C.H."/>
            <person name="Jeong H."/>
            <person name="Hur C.G."/>
            <person name="Kim J.J."/>
        </authorList>
    </citation>
    <scope>NUCLEOTIDE SEQUENCE [LARGE SCALE GENOMIC DNA]</scope>
    <source>
        <strain>KCTC 0769BP / MBEL55E</strain>
    </source>
</reference>
<dbReference type="EC" id="1.8.1.2" evidence="1"/>
<dbReference type="EMBL" id="AE016827">
    <property type="protein sequence ID" value="AAU37856.1"/>
    <property type="molecule type" value="Genomic_DNA"/>
</dbReference>
<dbReference type="RefSeq" id="WP_011200423.1">
    <property type="nucleotide sequence ID" value="NC_006300.1"/>
</dbReference>
<dbReference type="SMR" id="Q65T54"/>
<dbReference type="STRING" id="221988.MS1249"/>
<dbReference type="KEGG" id="msu:MS1249"/>
<dbReference type="eggNOG" id="COG0155">
    <property type="taxonomic scope" value="Bacteria"/>
</dbReference>
<dbReference type="HOGENOM" id="CLU_001975_3_2_6"/>
<dbReference type="OrthoDB" id="3189055at2"/>
<dbReference type="UniPathway" id="UPA00140">
    <property type="reaction ID" value="UER00207"/>
</dbReference>
<dbReference type="Proteomes" id="UP000000607">
    <property type="component" value="Chromosome"/>
</dbReference>
<dbReference type="GO" id="GO:0009337">
    <property type="term" value="C:sulfite reductase complex (NADPH)"/>
    <property type="evidence" value="ECO:0007669"/>
    <property type="project" value="InterPro"/>
</dbReference>
<dbReference type="GO" id="GO:0051539">
    <property type="term" value="F:4 iron, 4 sulfur cluster binding"/>
    <property type="evidence" value="ECO:0007669"/>
    <property type="project" value="UniProtKB-KW"/>
</dbReference>
<dbReference type="GO" id="GO:0020037">
    <property type="term" value="F:heme binding"/>
    <property type="evidence" value="ECO:0007669"/>
    <property type="project" value="InterPro"/>
</dbReference>
<dbReference type="GO" id="GO:0046872">
    <property type="term" value="F:metal ion binding"/>
    <property type="evidence" value="ECO:0007669"/>
    <property type="project" value="UniProtKB-KW"/>
</dbReference>
<dbReference type="GO" id="GO:0050661">
    <property type="term" value="F:NADP binding"/>
    <property type="evidence" value="ECO:0007669"/>
    <property type="project" value="InterPro"/>
</dbReference>
<dbReference type="GO" id="GO:0050311">
    <property type="term" value="F:sulfite reductase (ferredoxin) activity"/>
    <property type="evidence" value="ECO:0007669"/>
    <property type="project" value="TreeGrafter"/>
</dbReference>
<dbReference type="GO" id="GO:0004783">
    <property type="term" value="F:sulfite reductase (NADPH) activity"/>
    <property type="evidence" value="ECO:0007669"/>
    <property type="project" value="UniProtKB-UniRule"/>
</dbReference>
<dbReference type="GO" id="GO:0019344">
    <property type="term" value="P:cysteine biosynthetic process"/>
    <property type="evidence" value="ECO:0007669"/>
    <property type="project" value="UniProtKB-KW"/>
</dbReference>
<dbReference type="GO" id="GO:0070814">
    <property type="term" value="P:hydrogen sulfide biosynthetic process"/>
    <property type="evidence" value="ECO:0007669"/>
    <property type="project" value="UniProtKB-UniRule"/>
</dbReference>
<dbReference type="GO" id="GO:0000103">
    <property type="term" value="P:sulfate assimilation"/>
    <property type="evidence" value="ECO:0007669"/>
    <property type="project" value="UniProtKB-UniRule"/>
</dbReference>
<dbReference type="FunFam" id="3.30.413.10:FF:000003">
    <property type="entry name" value="Sulfite reductase [NADPH] hemoprotein beta-component"/>
    <property type="match status" value="1"/>
</dbReference>
<dbReference type="FunFam" id="3.30.413.10:FF:000004">
    <property type="entry name" value="Sulfite reductase [NADPH] hemoprotein beta-component"/>
    <property type="match status" value="1"/>
</dbReference>
<dbReference type="Gene3D" id="3.30.413.10">
    <property type="entry name" value="Sulfite Reductase Hemoprotein, domain 1"/>
    <property type="match status" value="2"/>
</dbReference>
<dbReference type="HAMAP" id="MF_01540">
    <property type="entry name" value="CysI"/>
    <property type="match status" value="1"/>
</dbReference>
<dbReference type="InterPro" id="IPR011786">
    <property type="entry name" value="CysI"/>
</dbReference>
<dbReference type="InterPro" id="IPR005117">
    <property type="entry name" value="NiRdtase/SiRdtase_haem-b_fer"/>
</dbReference>
<dbReference type="InterPro" id="IPR036136">
    <property type="entry name" value="Nit/Sulf_reduc_fer-like_dom_sf"/>
</dbReference>
<dbReference type="InterPro" id="IPR006067">
    <property type="entry name" value="NO2/SO3_Rdtase_4Fe4S_dom"/>
</dbReference>
<dbReference type="InterPro" id="IPR045169">
    <property type="entry name" value="NO2/SO3_Rdtase_4Fe4S_prot"/>
</dbReference>
<dbReference type="InterPro" id="IPR045854">
    <property type="entry name" value="NO2/SO3_Rdtase_4Fe4S_sf"/>
</dbReference>
<dbReference type="InterPro" id="IPR006066">
    <property type="entry name" value="NO2/SO3_Rdtase_FeS/sirohaem_BS"/>
</dbReference>
<dbReference type="NCBIfam" id="TIGR02041">
    <property type="entry name" value="CysI"/>
    <property type="match status" value="1"/>
</dbReference>
<dbReference type="NCBIfam" id="NF010029">
    <property type="entry name" value="PRK13504.1"/>
    <property type="match status" value="1"/>
</dbReference>
<dbReference type="PANTHER" id="PTHR11493:SF47">
    <property type="entry name" value="SULFITE REDUCTASE [NADPH] SUBUNIT BETA"/>
    <property type="match status" value="1"/>
</dbReference>
<dbReference type="PANTHER" id="PTHR11493">
    <property type="entry name" value="SULFITE REDUCTASE [NADPH] SUBUNIT BETA-RELATED"/>
    <property type="match status" value="1"/>
</dbReference>
<dbReference type="Pfam" id="PF01077">
    <property type="entry name" value="NIR_SIR"/>
    <property type="match status" value="1"/>
</dbReference>
<dbReference type="Pfam" id="PF03460">
    <property type="entry name" value="NIR_SIR_ferr"/>
    <property type="match status" value="2"/>
</dbReference>
<dbReference type="PRINTS" id="PR00397">
    <property type="entry name" value="SIROHAEM"/>
</dbReference>
<dbReference type="SUPFAM" id="SSF56014">
    <property type="entry name" value="Nitrite and sulphite reductase 4Fe-4S domain-like"/>
    <property type="match status" value="2"/>
</dbReference>
<dbReference type="SUPFAM" id="SSF55124">
    <property type="entry name" value="Nitrite/Sulfite reductase N-terminal domain-like"/>
    <property type="match status" value="2"/>
</dbReference>
<dbReference type="PROSITE" id="PS00365">
    <property type="entry name" value="NIR_SIR"/>
    <property type="match status" value="1"/>
</dbReference>
<organism>
    <name type="scientific">Mannheimia succiniciproducens (strain KCTC 0769BP / MBEL55E)</name>
    <dbReference type="NCBI Taxonomy" id="221988"/>
    <lineage>
        <taxon>Bacteria</taxon>
        <taxon>Pseudomonadati</taxon>
        <taxon>Pseudomonadota</taxon>
        <taxon>Gammaproteobacteria</taxon>
        <taxon>Pasteurellales</taxon>
        <taxon>Pasteurellaceae</taxon>
        <taxon>Basfia</taxon>
    </lineage>
</organism>
<evidence type="ECO:0000255" key="1">
    <source>
        <dbReference type="HAMAP-Rule" id="MF_01540"/>
    </source>
</evidence>
<evidence type="ECO:0000256" key="2">
    <source>
        <dbReference type="SAM" id="MobiDB-lite"/>
    </source>
</evidence>
<sequence>MSDKKQKGLEWQDNPLSDNERLKEESNHLRGTILDDLEDGLTGGFKGDNFQLIRFHGMYEQDDRDIRAERQEEKLEPRKFMLLRCRLPGGIIKPEQWIEIDKFARDNNYYQSIRLTNRQTFQYHGVPKTKLQDMHRLLHKLGLDSIATASDMNRNVLCSSNPVESELHQEAYEWAKKISEHLLPRTNGYLDVWISGKKVQSSDSFLGQEDEPILGNRYLPRKYKTAVVLPPLNDVDLYSNDMNFVGIKDEKTGKLAGFNVLVGGGLSFEHGNTKTYPNIALELGYVPVEDTLKAAESIVTTQRDFGNRADRKNARLRYTIQNMTLEGFREEVERRMGRRFEAIRPFEFTERGDRIGWVKGIDKKWHLTCFIESGRLVDKPDLPLMTGMLELAKVHKGDFRITANQNIIIANVAEEDKRQIEDIARQYGLIRKITKLRENAMSCVSFPTCPLAMAESERVLPEFIDELDKIMAKHHVEQDYIVTRITGCPNGCGRAMLAEIGLVGKAVGRYNLHLGGNIAGTRIPRLYKENITLDEILSELDGLIARWATERDQGEGFGDFVLRVGIIKPVVNPVVDFWDENLIPTVAV</sequence>
<proteinExistence type="inferred from homology"/>
<keyword id="KW-0004">4Fe-4S</keyword>
<keyword id="KW-0028">Amino-acid biosynthesis</keyword>
<keyword id="KW-0198">Cysteine biosynthesis</keyword>
<keyword id="KW-0349">Heme</keyword>
<keyword id="KW-0408">Iron</keyword>
<keyword id="KW-0411">Iron-sulfur</keyword>
<keyword id="KW-0479">Metal-binding</keyword>
<keyword id="KW-0521">NADP</keyword>
<keyword id="KW-0560">Oxidoreductase</keyword>
<feature type="chain" id="PRO_0000199900" description="Sulfite reductase [NADPH] hemoprotein beta-component">
    <location>
        <begin position="1"/>
        <end position="588"/>
    </location>
</feature>
<feature type="region of interest" description="Disordered" evidence="2">
    <location>
        <begin position="1"/>
        <end position="20"/>
    </location>
</feature>
<feature type="compositionally biased region" description="Basic and acidic residues" evidence="2">
    <location>
        <begin position="1"/>
        <end position="10"/>
    </location>
</feature>
<feature type="binding site" evidence="1">
    <location>
        <position position="443"/>
    </location>
    <ligand>
        <name>[4Fe-4S] cluster</name>
        <dbReference type="ChEBI" id="CHEBI:49883"/>
    </ligand>
</feature>
<feature type="binding site" evidence="1">
    <location>
        <position position="449"/>
    </location>
    <ligand>
        <name>[4Fe-4S] cluster</name>
        <dbReference type="ChEBI" id="CHEBI:49883"/>
    </ligand>
</feature>
<feature type="binding site" evidence="1">
    <location>
        <position position="488"/>
    </location>
    <ligand>
        <name>[4Fe-4S] cluster</name>
        <dbReference type="ChEBI" id="CHEBI:49883"/>
    </ligand>
</feature>
<feature type="binding site" evidence="1">
    <location>
        <position position="492"/>
    </location>
    <ligand>
        <name>[4Fe-4S] cluster</name>
        <dbReference type="ChEBI" id="CHEBI:49883"/>
    </ligand>
</feature>
<feature type="binding site" description="axial binding residue" evidence="1">
    <location>
        <position position="492"/>
    </location>
    <ligand>
        <name>siroheme</name>
        <dbReference type="ChEBI" id="CHEBI:60052"/>
    </ligand>
    <ligandPart>
        <name>Fe</name>
        <dbReference type="ChEBI" id="CHEBI:18248"/>
    </ligandPart>
</feature>
<accession>Q65T54</accession>
<protein>
    <recommendedName>
        <fullName evidence="1">Sulfite reductase [NADPH] hemoprotein beta-component</fullName>
        <shortName evidence="1">SiR-HP</shortName>
        <shortName evidence="1">SiRHP</shortName>
        <ecNumber evidence="1">1.8.1.2</ecNumber>
    </recommendedName>
</protein>
<comment type="function">
    <text evidence="1">Component of the sulfite reductase complex that catalyzes the 6-electron reduction of sulfite to sulfide. This is one of several activities required for the biosynthesis of L-cysteine from sulfate.</text>
</comment>
<comment type="catalytic activity">
    <reaction evidence="1">
        <text>hydrogen sulfide + 3 NADP(+) + 3 H2O = sulfite + 3 NADPH + 4 H(+)</text>
        <dbReference type="Rhea" id="RHEA:13801"/>
        <dbReference type="ChEBI" id="CHEBI:15377"/>
        <dbReference type="ChEBI" id="CHEBI:15378"/>
        <dbReference type="ChEBI" id="CHEBI:17359"/>
        <dbReference type="ChEBI" id="CHEBI:29919"/>
        <dbReference type="ChEBI" id="CHEBI:57783"/>
        <dbReference type="ChEBI" id="CHEBI:58349"/>
        <dbReference type="EC" id="1.8.1.2"/>
    </reaction>
</comment>
<comment type="cofactor">
    <cofactor evidence="1">
        <name>siroheme</name>
        <dbReference type="ChEBI" id="CHEBI:60052"/>
    </cofactor>
    <text evidence="1">Binds 1 siroheme per subunit.</text>
</comment>
<comment type="cofactor">
    <cofactor evidence="1">
        <name>[4Fe-4S] cluster</name>
        <dbReference type="ChEBI" id="CHEBI:49883"/>
    </cofactor>
    <text evidence="1">Binds 1 [4Fe-4S] cluster per subunit.</text>
</comment>
<comment type="pathway">
    <text evidence="1">Sulfur metabolism; hydrogen sulfide biosynthesis; hydrogen sulfide from sulfite (NADPH route): step 1/1.</text>
</comment>
<comment type="subunit">
    <text evidence="1">Alpha(8)-beta(8). The alpha component is a flavoprotein, the beta component is a hemoprotein.</text>
</comment>
<comment type="similarity">
    <text evidence="1">Belongs to the nitrite and sulfite reductase 4Fe-4S domain family.</text>
</comment>
<gene>
    <name evidence="1" type="primary">cysI</name>
    <name type="ordered locus">MS1249</name>
</gene>
<name>CYSI_MANSM</name>